<sequence length="550" mass="62574">MKSVRYLIGLFAFIACYYLLPISTRLLWQPDETRYAEISREMLASGDWIVPHLLGLRYFEKPIAGYWINSIGQWLFGANNFGVRAGVIFATLLTAALVTWFTLRLWRDKRLALLATVIYLSLFIVYAIGTYAVLDPFIAFWLVAGMCSFWLAMQAQTWKGKSAGFLLLGITCGMGVMTKGFLALAVPVLSVLPWVATQKRWKDLFIYGWLAVISCVLTVLPWGLTIAQREPDFWHYFFWVEHIQRFALDDAQHRAPFWYYVPVIIAGSLPWLGLLPGALYTGWKNRKHSATVYLLSWTIMPLLFFSVAKGKLPTYILSCFAPLAMLMAHYALLAAKNNPLALRINGWINIAFGVTGIIATFVVSPWGPMNTPVWQTFESYKVFCAWSIFSLWAFFGWYTLTNVEKTWSFAALCPLGLALLVGFSIPDRVMEGKHPQFFVEMTQESLQPSRYILTDSVGVAAGLAWSLQRDDIIMYRQTGELKYGLNYPDAKGRFVSGDEFANWLNQHRQEGIITLVLSVDRDEDINSLAIPPADAIDRQERLVLIQYRPK</sequence>
<dbReference type="EC" id="2.4.2.43" evidence="1"/>
<dbReference type="EMBL" id="AE005174">
    <property type="protein sequence ID" value="AAG57388.1"/>
    <property type="molecule type" value="Genomic_DNA"/>
</dbReference>
<dbReference type="EMBL" id="BA000007">
    <property type="protein sequence ID" value="BAB36568.1"/>
    <property type="molecule type" value="Genomic_DNA"/>
</dbReference>
<dbReference type="PIR" id="A91022">
    <property type="entry name" value="A91022"/>
</dbReference>
<dbReference type="PIR" id="H85865">
    <property type="entry name" value="H85865"/>
</dbReference>
<dbReference type="RefSeq" id="NP_311172.1">
    <property type="nucleotide sequence ID" value="NC_002695.1"/>
</dbReference>
<dbReference type="RefSeq" id="WP_000844063.1">
    <property type="nucleotide sequence ID" value="NZ_VOAI01000001.1"/>
</dbReference>
<dbReference type="SMR" id="Q8XDZ1"/>
<dbReference type="STRING" id="155864.Z3515"/>
<dbReference type="GeneID" id="75172388"/>
<dbReference type="GeneID" id="916853"/>
<dbReference type="KEGG" id="ece:Z3515"/>
<dbReference type="KEGG" id="ecs:ECs_3145"/>
<dbReference type="PATRIC" id="fig|386585.9.peg.3281"/>
<dbReference type="eggNOG" id="COG1807">
    <property type="taxonomic scope" value="Bacteria"/>
</dbReference>
<dbReference type="HOGENOM" id="CLU_019200_2_1_6"/>
<dbReference type="OMA" id="KGPLILM"/>
<dbReference type="UniPathway" id="UPA00037"/>
<dbReference type="Proteomes" id="UP000000558">
    <property type="component" value="Chromosome"/>
</dbReference>
<dbReference type="Proteomes" id="UP000002519">
    <property type="component" value="Chromosome"/>
</dbReference>
<dbReference type="GO" id="GO:0005886">
    <property type="term" value="C:plasma membrane"/>
    <property type="evidence" value="ECO:0007669"/>
    <property type="project" value="UniProtKB-SubCell"/>
</dbReference>
<dbReference type="GO" id="GO:0103015">
    <property type="term" value="F:4-amino-4-deoxy-L-arabinose transferase activity"/>
    <property type="evidence" value="ECO:0007669"/>
    <property type="project" value="UniProtKB-EC"/>
</dbReference>
<dbReference type="GO" id="GO:0000030">
    <property type="term" value="F:mannosyltransferase activity"/>
    <property type="evidence" value="ECO:0007669"/>
    <property type="project" value="InterPro"/>
</dbReference>
<dbReference type="GO" id="GO:0009245">
    <property type="term" value="P:lipid A biosynthetic process"/>
    <property type="evidence" value="ECO:0007669"/>
    <property type="project" value="UniProtKB-UniRule"/>
</dbReference>
<dbReference type="GO" id="GO:0009103">
    <property type="term" value="P:lipopolysaccharide biosynthetic process"/>
    <property type="evidence" value="ECO:0007669"/>
    <property type="project" value="UniProtKB-KW"/>
</dbReference>
<dbReference type="GO" id="GO:0006493">
    <property type="term" value="P:protein O-linked glycosylation"/>
    <property type="evidence" value="ECO:0007669"/>
    <property type="project" value="InterPro"/>
</dbReference>
<dbReference type="GO" id="GO:0010041">
    <property type="term" value="P:response to iron(III) ion"/>
    <property type="evidence" value="ECO:0007669"/>
    <property type="project" value="TreeGrafter"/>
</dbReference>
<dbReference type="HAMAP" id="MF_01165">
    <property type="entry name" value="ArnT_transfer"/>
    <property type="match status" value="1"/>
</dbReference>
<dbReference type="InterPro" id="IPR022839">
    <property type="entry name" value="ArnT_tfrase"/>
</dbReference>
<dbReference type="InterPro" id="IPR003342">
    <property type="entry name" value="Glyco_trans_39/83"/>
</dbReference>
<dbReference type="InterPro" id="IPR050297">
    <property type="entry name" value="LipidA_mod_glycosyltrf_83"/>
</dbReference>
<dbReference type="NCBIfam" id="NF009784">
    <property type="entry name" value="PRK13279.1"/>
    <property type="match status" value="1"/>
</dbReference>
<dbReference type="PANTHER" id="PTHR33908">
    <property type="entry name" value="MANNOSYLTRANSFERASE YKCB-RELATED"/>
    <property type="match status" value="1"/>
</dbReference>
<dbReference type="PANTHER" id="PTHR33908:SF3">
    <property type="entry name" value="UNDECAPRENYL PHOSPHATE-ALPHA-4-AMINO-4-DEOXY-L-ARABINOSE ARABINOSYL TRANSFERASE"/>
    <property type="match status" value="1"/>
</dbReference>
<dbReference type="Pfam" id="PF02366">
    <property type="entry name" value="PMT"/>
    <property type="match status" value="1"/>
</dbReference>
<protein>
    <recommendedName>
        <fullName evidence="1">Undecaprenyl phosphate-alpha-4-amino-4-deoxy-L-arabinose arabinosyl transferase</fullName>
        <ecNumber evidence="1">2.4.2.43</ecNumber>
    </recommendedName>
    <alternativeName>
        <fullName evidence="1">4-amino-4-deoxy-L-arabinose lipid A transferase</fullName>
    </alternativeName>
    <alternativeName>
        <fullName evidence="1">Lipid IV(A) 4-amino-4-deoxy-L-arabinosyltransferase</fullName>
    </alternativeName>
    <alternativeName>
        <fullName evidence="1">Undecaprenyl phosphate-alpha-L-Ara4N transferase</fullName>
    </alternativeName>
</protein>
<name>ARNT_ECO57</name>
<proteinExistence type="inferred from homology"/>
<feature type="chain" id="PRO_0000121505" description="Undecaprenyl phosphate-alpha-4-amino-4-deoxy-L-arabinose arabinosyl transferase">
    <location>
        <begin position="1"/>
        <end position="550"/>
    </location>
</feature>
<feature type="transmembrane region" description="Helical" evidence="1">
    <location>
        <begin position="7"/>
        <end position="27"/>
    </location>
</feature>
<feature type="transmembrane region" description="Helical" evidence="1">
    <location>
        <begin position="81"/>
        <end position="101"/>
    </location>
</feature>
<feature type="transmembrane region" description="Helical" evidence="1">
    <location>
        <begin position="111"/>
        <end position="133"/>
    </location>
</feature>
<feature type="transmembrane region" description="Helical" evidence="1">
    <location>
        <begin position="137"/>
        <end position="154"/>
    </location>
</feature>
<feature type="transmembrane region" description="Helical" evidence="1">
    <location>
        <begin position="165"/>
        <end position="185"/>
    </location>
</feature>
<feature type="transmembrane region" description="Helical" evidence="1">
    <location>
        <begin position="204"/>
        <end position="224"/>
    </location>
</feature>
<feature type="transmembrane region" description="Helical" evidence="1">
    <location>
        <begin position="255"/>
        <end position="275"/>
    </location>
</feature>
<feature type="transmembrane region" description="Helical" evidence="1">
    <location>
        <begin position="288"/>
        <end position="308"/>
    </location>
</feature>
<feature type="transmembrane region" description="Helical" evidence="1">
    <location>
        <begin position="315"/>
        <end position="335"/>
    </location>
</feature>
<feature type="transmembrane region" description="Helical" evidence="1">
    <location>
        <begin position="346"/>
        <end position="366"/>
    </location>
</feature>
<feature type="transmembrane region" description="Helical" evidence="1">
    <location>
        <begin position="382"/>
        <end position="402"/>
    </location>
</feature>
<feature type="transmembrane region" description="Helical" evidence="1">
    <location>
        <begin position="406"/>
        <end position="426"/>
    </location>
</feature>
<accession>Q8XDZ1</accession>
<accession>Q7AC21</accession>
<reference key="1">
    <citation type="journal article" date="2001" name="Nature">
        <title>Genome sequence of enterohaemorrhagic Escherichia coli O157:H7.</title>
        <authorList>
            <person name="Perna N.T."/>
            <person name="Plunkett G. III"/>
            <person name="Burland V."/>
            <person name="Mau B."/>
            <person name="Glasner J.D."/>
            <person name="Rose D.J."/>
            <person name="Mayhew G.F."/>
            <person name="Evans P.S."/>
            <person name="Gregor J."/>
            <person name="Kirkpatrick H.A."/>
            <person name="Posfai G."/>
            <person name="Hackett J."/>
            <person name="Klink S."/>
            <person name="Boutin A."/>
            <person name="Shao Y."/>
            <person name="Miller L."/>
            <person name="Grotbeck E.J."/>
            <person name="Davis N.W."/>
            <person name="Lim A."/>
            <person name="Dimalanta E.T."/>
            <person name="Potamousis K."/>
            <person name="Apodaca J."/>
            <person name="Anantharaman T.S."/>
            <person name="Lin J."/>
            <person name="Yen G."/>
            <person name="Schwartz D.C."/>
            <person name="Welch R.A."/>
            <person name="Blattner F.R."/>
        </authorList>
    </citation>
    <scope>NUCLEOTIDE SEQUENCE [LARGE SCALE GENOMIC DNA]</scope>
    <source>
        <strain>O157:H7 / EDL933 / ATCC 700927 / EHEC</strain>
    </source>
</reference>
<reference key="2">
    <citation type="journal article" date="2001" name="DNA Res.">
        <title>Complete genome sequence of enterohemorrhagic Escherichia coli O157:H7 and genomic comparison with a laboratory strain K-12.</title>
        <authorList>
            <person name="Hayashi T."/>
            <person name="Makino K."/>
            <person name="Ohnishi M."/>
            <person name="Kurokawa K."/>
            <person name="Ishii K."/>
            <person name="Yokoyama K."/>
            <person name="Han C.-G."/>
            <person name="Ohtsubo E."/>
            <person name="Nakayama K."/>
            <person name="Murata T."/>
            <person name="Tanaka M."/>
            <person name="Tobe T."/>
            <person name="Iida T."/>
            <person name="Takami H."/>
            <person name="Honda T."/>
            <person name="Sasakawa C."/>
            <person name="Ogasawara N."/>
            <person name="Yasunaga T."/>
            <person name="Kuhara S."/>
            <person name="Shiba T."/>
            <person name="Hattori M."/>
            <person name="Shinagawa H."/>
        </authorList>
    </citation>
    <scope>NUCLEOTIDE SEQUENCE [LARGE SCALE GENOMIC DNA]</scope>
    <source>
        <strain>O157:H7 / Sakai / RIMD 0509952 / EHEC</strain>
    </source>
</reference>
<keyword id="KW-0997">Cell inner membrane</keyword>
<keyword id="KW-1003">Cell membrane</keyword>
<keyword id="KW-0328">Glycosyltransferase</keyword>
<keyword id="KW-0441">Lipid A biosynthesis</keyword>
<keyword id="KW-0444">Lipid biosynthesis</keyword>
<keyword id="KW-0443">Lipid metabolism</keyword>
<keyword id="KW-0448">Lipopolysaccharide biosynthesis</keyword>
<keyword id="KW-0472">Membrane</keyword>
<keyword id="KW-1185">Reference proteome</keyword>
<keyword id="KW-0808">Transferase</keyword>
<keyword id="KW-0812">Transmembrane</keyword>
<keyword id="KW-1133">Transmembrane helix</keyword>
<evidence type="ECO:0000255" key="1">
    <source>
        <dbReference type="HAMAP-Rule" id="MF_01165"/>
    </source>
</evidence>
<gene>
    <name evidence="1" type="primary">arnT</name>
    <name type="ordered locus">Z3515</name>
    <name type="ordered locus">ECs3145</name>
</gene>
<comment type="function">
    <text evidence="1">Catalyzes the transfer of the L-Ara4N moiety of the glycolipid undecaprenyl phosphate-alpha-L-Ara4N to lipid A. The modified arabinose is attached to lipid A and is required for resistance to polymyxin and cationic antimicrobial peptides.</text>
</comment>
<comment type="catalytic activity">
    <reaction evidence="1">
        <text>4-amino-4-deoxy-alpha-L-arabinopyranosyl di-trans,octa-cis-undecaprenyl phosphate + lipid IVA = lipid IIA + di-trans,octa-cis-undecaprenyl phosphate.</text>
        <dbReference type="EC" id="2.4.2.43"/>
    </reaction>
</comment>
<comment type="pathway">
    <text evidence="1">Lipopolysaccharide metabolism; 4-amino-4-deoxy-beta-L-arabinose-lipid A biosynthesis.</text>
</comment>
<comment type="subcellular location">
    <subcellularLocation>
        <location evidence="1">Cell inner membrane</location>
        <topology evidence="1">Multi-pass membrane protein</topology>
    </subcellularLocation>
</comment>
<comment type="similarity">
    <text evidence="1">Belongs to the glycosyltransferase 83 family.</text>
</comment>
<organism>
    <name type="scientific">Escherichia coli O157:H7</name>
    <dbReference type="NCBI Taxonomy" id="83334"/>
    <lineage>
        <taxon>Bacteria</taxon>
        <taxon>Pseudomonadati</taxon>
        <taxon>Pseudomonadota</taxon>
        <taxon>Gammaproteobacteria</taxon>
        <taxon>Enterobacterales</taxon>
        <taxon>Enterobacteriaceae</taxon>
        <taxon>Escherichia</taxon>
    </lineage>
</organism>